<keyword id="KW-0378">Hydrolase</keyword>
<keyword id="KW-0464">Manganese</keyword>
<evidence type="ECO:0000255" key="1">
    <source>
        <dbReference type="HAMAP-Rule" id="MF_01518"/>
    </source>
</evidence>
<reference key="1">
    <citation type="journal article" date="2008" name="J. Bacteriol.">
        <title>Complete genome sequence of the mosquitocidal bacterium Bacillus sphaericus C3-41 and comparison with those of closely related Bacillus species.</title>
        <authorList>
            <person name="Hu X."/>
            <person name="Fan W."/>
            <person name="Han B."/>
            <person name="Liu H."/>
            <person name="Zheng D."/>
            <person name="Li Q."/>
            <person name="Dong W."/>
            <person name="Yan J."/>
            <person name="Gao M."/>
            <person name="Berry C."/>
            <person name="Yuan Z."/>
        </authorList>
    </citation>
    <scope>NUCLEOTIDE SEQUENCE [LARGE SCALE GENOMIC DNA]</scope>
    <source>
        <strain>C3-41</strain>
    </source>
</reference>
<proteinExistence type="inferred from homology"/>
<organism>
    <name type="scientific">Lysinibacillus sphaericus (strain C3-41)</name>
    <dbReference type="NCBI Taxonomy" id="444177"/>
    <lineage>
        <taxon>Bacteria</taxon>
        <taxon>Bacillati</taxon>
        <taxon>Bacillota</taxon>
        <taxon>Bacilli</taxon>
        <taxon>Bacillales</taxon>
        <taxon>Bacillaceae</taxon>
        <taxon>Lysinibacillus</taxon>
    </lineage>
</organism>
<gene>
    <name evidence="1" type="primary">ade</name>
    <name type="ordered locus">Bsph_3357</name>
</gene>
<comment type="catalytic activity">
    <reaction evidence="1">
        <text>adenine + H2O + H(+) = hypoxanthine + NH4(+)</text>
        <dbReference type="Rhea" id="RHEA:23688"/>
        <dbReference type="ChEBI" id="CHEBI:15377"/>
        <dbReference type="ChEBI" id="CHEBI:15378"/>
        <dbReference type="ChEBI" id="CHEBI:16708"/>
        <dbReference type="ChEBI" id="CHEBI:17368"/>
        <dbReference type="ChEBI" id="CHEBI:28938"/>
        <dbReference type="EC" id="3.5.4.2"/>
    </reaction>
</comment>
<comment type="cofactor">
    <cofactor evidence="1">
        <name>Mn(2+)</name>
        <dbReference type="ChEBI" id="CHEBI:29035"/>
    </cofactor>
</comment>
<comment type="similarity">
    <text evidence="1">Belongs to the metallo-dependent hydrolases superfamily. Adenine deaminase family.</text>
</comment>
<protein>
    <recommendedName>
        <fullName evidence="1">Adenine deaminase</fullName>
        <shortName evidence="1">Adenase</shortName>
        <shortName evidence="1">Adenine aminase</shortName>
        <ecNumber evidence="1">3.5.4.2</ecNumber>
    </recommendedName>
</protein>
<accession>B1HR71</accession>
<feature type="chain" id="PRO_1000146243" description="Adenine deaminase">
    <location>
        <begin position="1"/>
        <end position="581"/>
    </location>
</feature>
<dbReference type="EC" id="3.5.4.2" evidence="1"/>
<dbReference type="EMBL" id="CP000817">
    <property type="protein sequence ID" value="ACA40851.1"/>
    <property type="molecule type" value="Genomic_DNA"/>
</dbReference>
<dbReference type="RefSeq" id="WP_012294915.1">
    <property type="nucleotide sequence ID" value="NC_010382.1"/>
</dbReference>
<dbReference type="SMR" id="B1HR71"/>
<dbReference type="EnsemblBacteria" id="ACA40851">
    <property type="protein sequence ID" value="ACA40851"/>
    <property type="gene ID" value="Bsph_3357"/>
</dbReference>
<dbReference type="KEGG" id="lsp:Bsph_3357"/>
<dbReference type="HOGENOM" id="CLU_027935_0_0_9"/>
<dbReference type="Proteomes" id="UP000002164">
    <property type="component" value="Chromosome"/>
</dbReference>
<dbReference type="GO" id="GO:0000034">
    <property type="term" value="F:adenine deaminase activity"/>
    <property type="evidence" value="ECO:0007669"/>
    <property type="project" value="UniProtKB-UniRule"/>
</dbReference>
<dbReference type="GO" id="GO:0006146">
    <property type="term" value="P:adenine catabolic process"/>
    <property type="evidence" value="ECO:0007669"/>
    <property type="project" value="InterPro"/>
</dbReference>
<dbReference type="CDD" id="cd01295">
    <property type="entry name" value="AdeC"/>
    <property type="match status" value="1"/>
</dbReference>
<dbReference type="FunFam" id="3.20.20.140:FF:000016">
    <property type="entry name" value="Adenine deaminase"/>
    <property type="match status" value="1"/>
</dbReference>
<dbReference type="Gene3D" id="3.20.20.140">
    <property type="entry name" value="Metal-dependent hydrolases"/>
    <property type="match status" value="1"/>
</dbReference>
<dbReference type="Gene3D" id="2.30.40.10">
    <property type="entry name" value="Urease, subunit C, domain 1"/>
    <property type="match status" value="1"/>
</dbReference>
<dbReference type="HAMAP" id="MF_01518">
    <property type="entry name" value="Adenine_deamin"/>
    <property type="match status" value="1"/>
</dbReference>
<dbReference type="InterPro" id="IPR006679">
    <property type="entry name" value="Adenine_deam"/>
</dbReference>
<dbReference type="InterPro" id="IPR026912">
    <property type="entry name" value="Adenine_deam_C"/>
</dbReference>
<dbReference type="InterPro" id="IPR006680">
    <property type="entry name" value="Amidohydro-rel"/>
</dbReference>
<dbReference type="InterPro" id="IPR011059">
    <property type="entry name" value="Metal-dep_hydrolase_composite"/>
</dbReference>
<dbReference type="InterPro" id="IPR032466">
    <property type="entry name" value="Metal_Hydrolase"/>
</dbReference>
<dbReference type="NCBIfam" id="TIGR01178">
    <property type="entry name" value="ade"/>
    <property type="match status" value="1"/>
</dbReference>
<dbReference type="PANTHER" id="PTHR11113:SF2">
    <property type="entry name" value="ADENINE DEAMINASE"/>
    <property type="match status" value="1"/>
</dbReference>
<dbReference type="PANTHER" id="PTHR11113">
    <property type="entry name" value="N-ACETYLGLUCOSAMINE-6-PHOSPHATE DEACETYLASE"/>
    <property type="match status" value="1"/>
</dbReference>
<dbReference type="Pfam" id="PF13382">
    <property type="entry name" value="Adenine_deam_C"/>
    <property type="match status" value="1"/>
</dbReference>
<dbReference type="Pfam" id="PF01979">
    <property type="entry name" value="Amidohydro_1"/>
    <property type="match status" value="1"/>
</dbReference>
<dbReference type="SUPFAM" id="SSF51338">
    <property type="entry name" value="Composite domain of metallo-dependent hydrolases"/>
    <property type="match status" value="1"/>
</dbReference>
<dbReference type="SUPFAM" id="SSF51556">
    <property type="entry name" value="Metallo-dependent hydrolases"/>
    <property type="match status" value="1"/>
</dbReference>
<name>ADEC_LYSSC</name>
<sequence length="581" mass="63343">MTTKLQQLTQNILSSQGKLEADFILKNAQVADVYTLTWRKADIVVKNGTIVALDHSNRFHAKEVEDAAGSYVIPGLIDGHIHIESSMLTPGEFSRVLIPHGITTVITDPHEIANVAGAEGIQFMLDDAQKADMDIFVMLPSSVPGTQFENAGATLTAQDLEPFLHHEQVRGLAEVMDFPAVLNGEEGMLQKILLSKEANLVIDGHCAGLQSEQITGYRAAGIQTDHECVTAEEAIDRVEQGMYVLIREGSAAKNLRDLLPAIQSHNARRFGFCTDDKYVDELMDEGSINYDVAMAIAEGMTPLQAIQLATVNTAECYRLFDRGVLAPGYKADFVLVDDLSTMQAKAVWKNGHKVAENGEMLTSRQEAKVPAHIHHSVHLPSMTKDSLQLSFKKGTRANVMEIVPNQLITNHLVIDVPVKEGVFVPSIEQDLLKLAVIERHHHLHTTGLGIVKGFGLQKGAVATTVAHDSHNALVVGTNDEDMILALSRIQEIQGGFVIVADGEILAEMPLTIGGLMTDVPAQQAKEQLAGLHNALQKLNPTLDFHFLLTFSFVALPVIPALKLTDTGLFDVTTFQHIEVEA</sequence>